<keyword id="KW-0503">Monooxygenase</keyword>
<keyword id="KW-0560">Oxidoreductase</keyword>
<organism>
    <name type="scientific">Aspergillus sp. (strain MF297-2)</name>
    <dbReference type="NCBI Taxonomy" id="877550"/>
    <lineage>
        <taxon>Eukaryota</taxon>
        <taxon>Fungi</taxon>
        <taxon>Dikarya</taxon>
        <taxon>Ascomycota</taxon>
        <taxon>Pezizomycotina</taxon>
        <taxon>Eurotiomycetes</taxon>
        <taxon>Eurotiomycetidae</taxon>
        <taxon>Eurotiales</taxon>
        <taxon>Aspergillaceae</taxon>
        <taxon>Aspergillus</taxon>
    </lineage>
</organism>
<protein>
    <recommendedName>
        <fullName evidence="6">Probable decarboxylase notQ</fullName>
        <ecNumber evidence="6">1.-.-.-</ecNumber>
    </recommendedName>
    <alternativeName>
        <fullName evidence="5">Notoamide biosynthesis cluster protein Q</fullName>
    </alternativeName>
</protein>
<comment type="function">
    <text evidence="3 4 7">Probable decarboxylase; part of the gene cluster that mediates the biosynthesis of notoamide, a fungal indole alkaloid that belongs to a family of natural products containing a characteristic bicyclo[2.2.2]diazaoctane core (PubMed:20722388). The first step of notoamide biosynthesis involves coupling of L-proline and L-tryptophan by the bimodular NRPS notE, to produce cyclo-L-tryptophan-L-proline called brevianamide F (PubMed:20722388). The reverse prenyltransferase notF then acts as a deoxybrevianamide E synthase and converts brevianamide F to deoxybrevianamide E via reverse prenylation at C-2 of the indole ring leading to the bicyclo[2.2.2]diazaoctane core (PubMed:20722388). Deoxybrevianamide E is further hydroxylated at C-6 of the indole ring, likely catalyzed by the cytochrome P450 monooxygenase notG, to yield 6-hydroxy-deoxybrevianamide E (Probable). 6-hydroxy-deoxybrevianamide E is a specific substrate of the prenyltransferase notC for normal prenylation at C-7 to produce 6-hydroxy-7-prenyl-deoxybrevianamide, also called notoamide S (PubMed:20722388). As the proposed pivotal branching point in notoamide biosynthesis, notoamide S can be diverted to notoamide E through an oxidative pyran ring closure putatively catalyzed by either notH cytochrome P450 monooxygenase or the notD FAD-linked oxidoreductase (Probable). This step would be followed by an indole 2,3-epoxidation-initiated pinacol-like rearrangement catalyzed by the notB FAD-dependent monooxygenase leading to the formation of notoamide C and notoamide D (PubMed:22188465). On the other hand notoamide S is converted to notoamide T by notH (or notD), a bifunctional oxidase that also functions as the intramolecular Diels-Alderase responsible for generation of (+)-notoamide T (Probable). To generate antipodal (-)-notoaminide T, notH' (or notD') in Aspergillus versicolor is expected to catalyze a Diels-Alder reaction leading to the opposite stereochemistry (Probable). The remaining oxidoreductase notD (or notH) likely catalyzes the oxidative pyran ring formation to yield (+)-stephacidin A (Probable). The FAD-dependent monooxygenase notI is highly similar to notB and is predicted to catalyze a similar conversion from (+)-stephacidin A to (-)-notoamide B via the 2,3-epoxidation of (+)-stephacidin A followed by a pinacol-type rearrangement (Probable). Finally, it remains unclear which enzyme could be responsible for the final hydroxylation steps leading to notoamide A and sclerotiamide (Probable). The function of notQ in the notoamide biosynthesis has not been determined yet (Probable).</text>
</comment>
<comment type="biotechnology">
    <text evidence="2">Notoamides have been shown to exhibit antitumoral activities (PubMed:17304611). Notoamides A-C show moderate cytotoxicity against HeLa and L1210 cells with IC(50) values in the range of 22-52 mg/ml, but the IC(50) value of notoamide D is greater than 100 mg/ml (PubMed:17304611). Moreover, notoamide C induces G2/M-cell cycle arrest at a concentration of 6.3 mg/ml (PubMed:17304611).</text>
</comment>
<comment type="similarity">
    <text evidence="6">Belongs to the tpcK family.</text>
</comment>
<name>NOTQ_ASPSM</name>
<dbReference type="EC" id="1.-.-.-" evidence="6"/>
<dbReference type="EMBL" id="HM622670">
    <property type="protein sequence ID" value="ADM34150.1"/>
    <property type="molecule type" value="Genomic_DNA"/>
</dbReference>
<dbReference type="SMR" id="E1ACR2"/>
<dbReference type="GO" id="GO:0004497">
    <property type="term" value="F:monooxygenase activity"/>
    <property type="evidence" value="ECO:0007669"/>
    <property type="project" value="UniProtKB-KW"/>
</dbReference>
<dbReference type="Gene3D" id="3.30.70.100">
    <property type="match status" value="1"/>
</dbReference>
<dbReference type="InterPro" id="IPR011008">
    <property type="entry name" value="Dimeric_a/b-barrel"/>
</dbReference>
<dbReference type="InterPro" id="IPR009799">
    <property type="entry name" value="EthD_dom"/>
</dbReference>
<dbReference type="Pfam" id="PF07110">
    <property type="entry name" value="EthD"/>
    <property type="match status" value="1"/>
</dbReference>
<dbReference type="SUPFAM" id="SSF54909">
    <property type="entry name" value="Dimeric alpha+beta barrel"/>
    <property type="match status" value="1"/>
</dbReference>
<gene>
    <name evidence="5" type="primary">notQ</name>
</gene>
<feature type="chain" id="PRO_0000448829" description="Probable decarboxylase notQ">
    <location>
        <begin position="1"/>
        <end position="151"/>
    </location>
</feature>
<feature type="domain" description="EthD" evidence="1">
    <location>
        <begin position="30"/>
        <end position="125"/>
    </location>
</feature>
<sequence>MAFTEPEVPELNGSTKGKYLCLTICGYRKPGMSEEDYRHHMVNISAPMTKGLMVKYGVKRWTQIHNQSSTRALMSHLFDSQMAIVADFDCFSQVVFKDIEHYKRMKQDPWYQEHLIGDHEKFADTRRSMMTIGWIEEFVRDGEVVEGFKDS</sequence>
<proteinExistence type="evidence at protein level"/>
<accession>E1ACR2</accession>
<reference key="1">
    <citation type="journal article" date="2010" name="J. Am. Chem. Soc.">
        <title>Genome-based characterization of two prenylation steps in the assembly of the stephacidin and notoamide anticancer agents in a marine-derived Aspergillus sp.</title>
        <authorList>
            <person name="Ding Y."/>
            <person name="de Wet J.R."/>
            <person name="Cavalcoli J."/>
            <person name="Li S."/>
            <person name="Greshock T.J."/>
            <person name="Miller K.A."/>
            <person name="Finefield J.M."/>
            <person name="Sunderhaus J.D."/>
            <person name="McAfoos T.J."/>
            <person name="Tsukamoto S."/>
            <person name="Williams R.M."/>
            <person name="Sherman D.H."/>
        </authorList>
    </citation>
    <scope>NUCLEOTIDE SEQUENCE [GENOMIC DNA]</scope>
    <source>
        <strain>MF297-2</strain>
    </source>
</reference>
<reference key="2">
    <citation type="journal article" date="2007" name="Angew. Chem. Int. Ed.">
        <title>Notoamides A-D: prenylated indole alkaloids isolated from a marine-derived fungus, Aspergillus sp.</title>
        <authorList>
            <person name="Kato H."/>
            <person name="Yoshida T."/>
            <person name="Tokue T."/>
            <person name="Nojiri Y."/>
            <person name="Hirota H."/>
            <person name="Ohta T."/>
            <person name="Williams R.M."/>
            <person name="Tsukamoto S."/>
        </authorList>
    </citation>
    <scope>BIOTECHNOLOGY</scope>
</reference>
<reference key="3">
    <citation type="journal article" date="2012" name="J. Am. Chem. Soc.">
        <title>Biochemical characterization of NotB as an FAD-dependent oxidase in the biosynthesis of notoamide indole alkaloids.</title>
        <authorList>
            <person name="Li S."/>
            <person name="Finefield J.M."/>
            <person name="Sunderhaus J.D."/>
            <person name="McAfoos T.J."/>
            <person name="Williams R.M."/>
            <person name="Sherman D.H."/>
        </authorList>
    </citation>
    <scope>FUNCTION</scope>
</reference>
<reference key="4">
    <citation type="journal article" date="2012" name="Med. Chem. Commun.">
        <title>Comparative analysis of the biosynthetic systems for fungal bicyclo[2.2.2]diazaoctane indole alkaloids: the (+)/(-)-notoamide, paraherquamide and malbrancheamide pathways.</title>
        <authorList>
            <person name="Li S."/>
            <person name="Anand K."/>
            <person name="Tran H."/>
            <person name="Yu F."/>
            <person name="Finefield J.M."/>
            <person name="Sunderhaus J.D."/>
            <person name="McAfoos T.J."/>
            <person name="Tsukamoto S."/>
            <person name="Williams R.M."/>
            <person name="Sherman D.H."/>
        </authorList>
    </citation>
    <scope>FUNCTION</scope>
</reference>
<evidence type="ECO:0000255" key="1"/>
<evidence type="ECO:0000269" key="2">
    <source>
    </source>
</evidence>
<evidence type="ECO:0000269" key="3">
    <source>
    </source>
</evidence>
<evidence type="ECO:0000269" key="4">
    <source>
    </source>
</evidence>
<evidence type="ECO:0000303" key="5">
    <source>
    </source>
</evidence>
<evidence type="ECO:0000305" key="6"/>
<evidence type="ECO:0000305" key="7">
    <source>
    </source>
</evidence>